<sequence length="300" mass="32158">MCKQMNLEGLTTEARNEATKKIDQVSTLEMVTLINQEDQKVAQAIEKVLPQIAAAIDAAAERFKKGGRLIYCGAGTSGRLGALDAIELTPTYSVSPERAFGILAGGEKAMYQAIEGAEDSKELAIEDLTQHQLTARDVVIAIAASGRTPYAVSAIEYGKKVGALTISVTCNNQSPMNQLAEIGIAPIVGPEVITGSTRMKAGSAQKMVLNMFSTGIMVKVGNIYQNLMVNVQPTNEKLIQRATNIIKEAAEIEESQAKEYLEAAQLEVAPAIVMAKAHVDFQKAKQLLAEHDGRISEVLA</sequence>
<accession>Q838I8</accession>
<proteinExistence type="inferred from homology"/>
<feature type="chain" id="PRO_0000249621" description="N-acetylmuramic acid 6-phosphate etherase 1">
    <location>
        <begin position="1"/>
        <end position="300"/>
    </location>
</feature>
<feature type="domain" description="SIS" evidence="1">
    <location>
        <begin position="59"/>
        <end position="222"/>
    </location>
</feature>
<feature type="active site" description="Proton donor" evidence="1">
    <location>
        <position position="87"/>
    </location>
</feature>
<feature type="active site" evidence="1">
    <location>
        <position position="118"/>
    </location>
</feature>
<organism>
    <name type="scientific">Enterococcus faecalis (strain ATCC 700802 / V583)</name>
    <dbReference type="NCBI Taxonomy" id="226185"/>
    <lineage>
        <taxon>Bacteria</taxon>
        <taxon>Bacillati</taxon>
        <taxon>Bacillota</taxon>
        <taxon>Bacilli</taxon>
        <taxon>Lactobacillales</taxon>
        <taxon>Enterococcaceae</taxon>
        <taxon>Enterococcus</taxon>
    </lineage>
</organism>
<comment type="function">
    <text evidence="1">Specifically catalyzes the cleavage of the D-lactyl ether substituent of MurNAc 6-phosphate, producing GlcNAc 6-phosphate and D-lactate.</text>
</comment>
<comment type="catalytic activity">
    <reaction evidence="1">
        <text>N-acetyl-D-muramate 6-phosphate + H2O = N-acetyl-D-glucosamine 6-phosphate + (R)-lactate</text>
        <dbReference type="Rhea" id="RHEA:26410"/>
        <dbReference type="ChEBI" id="CHEBI:15377"/>
        <dbReference type="ChEBI" id="CHEBI:16004"/>
        <dbReference type="ChEBI" id="CHEBI:57513"/>
        <dbReference type="ChEBI" id="CHEBI:58722"/>
        <dbReference type="EC" id="4.2.1.126"/>
    </reaction>
</comment>
<comment type="pathway">
    <text evidence="1">Amino-sugar metabolism; N-acetylmuramate degradation.</text>
</comment>
<comment type="subunit">
    <text evidence="1">Homodimer.</text>
</comment>
<comment type="miscellaneous">
    <text evidence="1">A lyase-type mechanism (elimination/hydration) is suggested for the cleavage of the lactyl ether bond of MurNAc 6-phosphate, with the formation of an alpha,beta-unsaturated aldehyde intermediate with (E)-stereochemistry, followed by the syn addition of water to give product.</text>
</comment>
<comment type="similarity">
    <text evidence="1">Belongs to the GCKR-like family. MurNAc-6-P etherase subfamily.</text>
</comment>
<name>MURQ1_ENTFA</name>
<keyword id="KW-0119">Carbohydrate metabolism</keyword>
<keyword id="KW-0456">Lyase</keyword>
<keyword id="KW-1185">Reference proteome</keyword>
<gene>
    <name evidence="1" type="primary">murQ1</name>
    <name type="ordered locus">EF_0459</name>
</gene>
<reference key="1">
    <citation type="journal article" date="2003" name="Science">
        <title>Role of mobile DNA in the evolution of vancomycin-resistant Enterococcus faecalis.</title>
        <authorList>
            <person name="Paulsen I.T."/>
            <person name="Banerjei L."/>
            <person name="Myers G.S.A."/>
            <person name="Nelson K.E."/>
            <person name="Seshadri R."/>
            <person name="Read T.D."/>
            <person name="Fouts D.E."/>
            <person name="Eisen J.A."/>
            <person name="Gill S.R."/>
            <person name="Heidelberg J.F."/>
            <person name="Tettelin H."/>
            <person name="Dodson R.J."/>
            <person name="Umayam L.A."/>
            <person name="Brinkac L.M."/>
            <person name="Beanan M.J."/>
            <person name="Daugherty S.C."/>
            <person name="DeBoy R.T."/>
            <person name="Durkin S.A."/>
            <person name="Kolonay J.F."/>
            <person name="Madupu R."/>
            <person name="Nelson W.C."/>
            <person name="Vamathevan J.J."/>
            <person name="Tran B."/>
            <person name="Upton J."/>
            <person name="Hansen T."/>
            <person name="Shetty J."/>
            <person name="Khouri H.M."/>
            <person name="Utterback T.R."/>
            <person name="Radune D."/>
            <person name="Ketchum K.A."/>
            <person name="Dougherty B.A."/>
            <person name="Fraser C.M."/>
        </authorList>
    </citation>
    <scope>NUCLEOTIDE SEQUENCE [LARGE SCALE GENOMIC DNA]</scope>
    <source>
        <strain>ATCC 700802 / V583</strain>
    </source>
</reference>
<protein>
    <recommendedName>
        <fullName evidence="1">N-acetylmuramic acid 6-phosphate etherase 1</fullName>
        <shortName evidence="1">MurNAc-6-P etherase 1</shortName>
        <ecNumber evidence="1">4.2.1.126</ecNumber>
    </recommendedName>
    <alternativeName>
        <fullName evidence="1">N-acetylmuramic acid 6-phosphate hydrolase 1</fullName>
    </alternativeName>
    <alternativeName>
        <fullName evidence="1">N-acetylmuramic acid 6-phosphate lyase 1</fullName>
    </alternativeName>
</protein>
<dbReference type="EC" id="4.2.1.126" evidence="1"/>
<dbReference type="EMBL" id="AE016830">
    <property type="protein sequence ID" value="AAO80314.1"/>
    <property type="molecule type" value="Genomic_DNA"/>
</dbReference>
<dbReference type="RefSeq" id="NP_814243.1">
    <property type="nucleotide sequence ID" value="NC_004668.1"/>
</dbReference>
<dbReference type="SMR" id="Q838I8"/>
<dbReference type="STRING" id="226185.EF_0459"/>
<dbReference type="EnsemblBacteria" id="AAO80314">
    <property type="protein sequence ID" value="AAO80314"/>
    <property type="gene ID" value="EF_0459"/>
</dbReference>
<dbReference type="KEGG" id="efa:EF0459"/>
<dbReference type="PATRIC" id="fig|226185.9.peg.424"/>
<dbReference type="eggNOG" id="COG2103">
    <property type="taxonomic scope" value="Bacteria"/>
</dbReference>
<dbReference type="HOGENOM" id="CLU_049049_1_1_9"/>
<dbReference type="UniPathway" id="UPA00342"/>
<dbReference type="Proteomes" id="UP000001415">
    <property type="component" value="Chromosome"/>
</dbReference>
<dbReference type="GO" id="GO:0097367">
    <property type="term" value="F:carbohydrate derivative binding"/>
    <property type="evidence" value="ECO:0007669"/>
    <property type="project" value="InterPro"/>
</dbReference>
<dbReference type="GO" id="GO:0016835">
    <property type="term" value="F:carbon-oxygen lyase activity"/>
    <property type="evidence" value="ECO:0007669"/>
    <property type="project" value="UniProtKB-UniRule"/>
</dbReference>
<dbReference type="GO" id="GO:0016803">
    <property type="term" value="F:ether hydrolase activity"/>
    <property type="evidence" value="ECO:0007669"/>
    <property type="project" value="TreeGrafter"/>
</dbReference>
<dbReference type="GO" id="GO:0046348">
    <property type="term" value="P:amino sugar catabolic process"/>
    <property type="evidence" value="ECO:0007669"/>
    <property type="project" value="InterPro"/>
</dbReference>
<dbReference type="GO" id="GO:0097173">
    <property type="term" value="P:N-acetylmuramic acid catabolic process"/>
    <property type="evidence" value="ECO:0007669"/>
    <property type="project" value="UniProtKB-UniPathway"/>
</dbReference>
<dbReference type="GO" id="GO:0009254">
    <property type="term" value="P:peptidoglycan turnover"/>
    <property type="evidence" value="ECO:0007669"/>
    <property type="project" value="TreeGrafter"/>
</dbReference>
<dbReference type="CDD" id="cd05007">
    <property type="entry name" value="SIS_Etherase"/>
    <property type="match status" value="1"/>
</dbReference>
<dbReference type="FunFam" id="3.40.50.10490:FF:000014">
    <property type="entry name" value="N-acetylmuramic acid 6-phosphate etherase"/>
    <property type="match status" value="1"/>
</dbReference>
<dbReference type="Gene3D" id="1.10.8.1080">
    <property type="match status" value="1"/>
</dbReference>
<dbReference type="Gene3D" id="3.40.50.10490">
    <property type="entry name" value="Glucose-6-phosphate isomerase like protein, domain 1"/>
    <property type="match status" value="1"/>
</dbReference>
<dbReference type="HAMAP" id="MF_00068">
    <property type="entry name" value="MurQ"/>
    <property type="match status" value="1"/>
</dbReference>
<dbReference type="InterPro" id="IPR005488">
    <property type="entry name" value="Etherase_MurQ"/>
</dbReference>
<dbReference type="InterPro" id="IPR005486">
    <property type="entry name" value="Glucokinase_regulatory_CS"/>
</dbReference>
<dbReference type="InterPro" id="IPR040190">
    <property type="entry name" value="MURQ/GCKR"/>
</dbReference>
<dbReference type="InterPro" id="IPR001347">
    <property type="entry name" value="SIS_dom"/>
</dbReference>
<dbReference type="InterPro" id="IPR046348">
    <property type="entry name" value="SIS_dom_sf"/>
</dbReference>
<dbReference type="NCBIfam" id="TIGR00274">
    <property type="entry name" value="N-acetylmuramic acid 6-phosphate etherase"/>
    <property type="match status" value="1"/>
</dbReference>
<dbReference type="NCBIfam" id="NF003915">
    <property type="entry name" value="PRK05441.1"/>
    <property type="match status" value="1"/>
</dbReference>
<dbReference type="NCBIfam" id="NF009222">
    <property type="entry name" value="PRK12570.1"/>
    <property type="match status" value="1"/>
</dbReference>
<dbReference type="PANTHER" id="PTHR10088">
    <property type="entry name" value="GLUCOKINASE REGULATORY PROTEIN"/>
    <property type="match status" value="1"/>
</dbReference>
<dbReference type="PANTHER" id="PTHR10088:SF4">
    <property type="entry name" value="GLUCOKINASE REGULATORY PROTEIN"/>
    <property type="match status" value="1"/>
</dbReference>
<dbReference type="Pfam" id="PF20741">
    <property type="entry name" value="GKRP-like_C"/>
    <property type="match status" value="1"/>
</dbReference>
<dbReference type="Pfam" id="PF22645">
    <property type="entry name" value="GKRP_SIS_N"/>
    <property type="match status" value="1"/>
</dbReference>
<dbReference type="SUPFAM" id="SSF53697">
    <property type="entry name" value="SIS domain"/>
    <property type="match status" value="1"/>
</dbReference>
<dbReference type="PROSITE" id="PS01272">
    <property type="entry name" value="GCKR"/>
    <property type="match status" value="1"/>
</dbReference>
<dbReference type="PROSITE" id="PS51464">
    <property type="entry name" value="SIS"/>
    <property type="match status" value="1"/>
</dbReference>
<evidence type="ECO:0000255" key="1">
    <source>
        <dbReference type="HAMAP-Rule" id="MF_00068"/>
    </source>
</evidence>